<comment type="subunit">
    <text evidence="1">Part of the 50S ribosomal subunit. Contacts protein L32.</text>
</comment>
<comment type="similarity">
    <text evidence="1">Belongs to the bacterial ribosomal protein bL17 family.</text>
</comment>
<feature type="chain" id="PRO_0000267877" description="Large ribosomal subunit protein bL17">
    <location>
        <begin position="1"/>
        <end position="138"/>
    </location>
</feature>
<organism>
    <name type="scientific">Granulibacter bethesdensis (strain ATCC BAA-1260 / CGDNIH1)</name>
    <dbReference type="NCBI Taxonomy" id="391165"/>
    <lineage>
        <taxon>Bacteria</taxon>
        <taxon>Pseudomonadati</taxon>
        <taxon>Pseudomonadota</taxon>
        <taxon>Alphaproteobacteria</taxon>
        <taxon>Acetobacterales</taxon>
        <taxon>Acetobacteraceae</taxon>
        <taxon>Granulibacter</taxon>
    </lineage>
</organism>
<keyword id="KW-1185">Reference proteome</keyword>
<keyword id="KW-0687">Ribonucleoprotein</keyword>
<keyword id="KW-0689">Ribosomal protein</keyword>
<dbReference type="EMBL" id="CP000394">
    <property type="protein sequence ID" value="ABI61477.1"/>
    <property type="molecule type" value="Genomic_DNA"/>
</dbReference>
<dbReference type="RefSeq" id="WP_011631286.1">
    <property type="nucleotide sequence ID" value="NC_008343.2"/>
</dbReference>
<dbReference type="SMR" id="Q0BUM5"/>
<dbReference type="STRING" id="391165.GbCGDNIH1_0579"/>
<dbReference type="GeneID" id="69744832"/>
<dbReference type="KEGG" id="gbe:GbCGDNIH1_0579"/>
<dbReference type="eggNOG" id="COG0203">
    <property type="taxonomic scope" value="Bacteria"/>
</dbReference>
<dbReference type="HOGENOM" id="CLU_074407_2_0_5"/>
<dbReference type="OrthoDB" id="9809073at2"/>
<dbReference type="Proteomes" id="UP000001963">
    <property type="component" value="Chromosome"/>
</dbReference>
<dbReference type="GO" id="GO:0022625">
    <property type="term" value="C:cytosolic large ribosomal subunit"/>
    <property type="evidence" value="ECO:0007669"/>
    <property type="project" value="TreeGrafter"/>
</dbReference>
<dbReference type="GO" id="GO:0003735">
    <property type="term" value="F:structural constituent of ribosome"/>
    <property type="evidence" value="ECO:0007669"/>
    <property type="project" value="InterPro"/>
</dbReference>
<dbReference type="GO" id="GO:0006412">
    <property type="term" value="P:translation"/>
    <property type="evidence" value="ECO:0007669"/>
    <property type="project" value="UniProtKB-UniRule"/>
</dbReference>
<dbReference type="FunFam" id="3.90.1030.10:FF:000001">
    <property type="entry name" value="50S ribosomal protein L17"/>
    <property type="match status" value="1"/>
</dbReference>
<dbReference type="Gene3D" id="3.90.1030.10">
    <property type="entry name" value="Ribosomal protein L17"/>
    <property type="match status" value="1"/>
</dbReference>
<dbReference type="HAMAP" id="MF_01368">
    <property type="entry name" value="Ribosomal_bL17"/>
    <property type="match status" value="1"/>
</dbReference>
<dbReference type="InterPro" id="IPR000456">
    <property type="entry name" value="Ribosomal_bL17"/>
</dbReference>
<dbReference type="InterPro" id="IPR047859">
    <property type="entry name" value="Ribosomal_bL17_CS"/>
</dbReference>
<dbReference type="InterPro" id="IPR036373">
    <property type="entry name" value="Ribosomal_bL17_sf"/>
</dbReference>
<dbReference type="NCBIfam" id="TIGR00059">
    <property type="entry name" value="L17"/>
    <property type="match status" value="1"/>
</dbReference>
<dbReference type="PANTHER" id="PTHR14413:SF16">
    <property type="entry name" value="LARGE RIBOSOMAL SUBUNIT PROTEIN BL17M"/>
    <property type="match status" value="1"/>
</dbReference>
<dbReference type="PANTHER" id="PTHR14413">
    <property type="entry name" value="RIBOSOMAL PROTEIN L17"/>
    <property type="match status" value="1"/>
</dbReference>
<dbReference type="Pfam" id="PF01196">
    <property type="entry name" value="Ribosomal_L17"/>
    <property type="match status" value="1"/>
</dbReference>
<dbReference type="SUPFAM" id="SSF64263">
    <property type="entry name" value="Prokaryotic ribosomal protein L17"/>
    <property type="match status" value="1"/>
</dbReference>
<dbReference type="PROSITE" id="PS01167">
    <property type="entry name" value="RIBOSOMAL_L17"/>
    <property type="match status" value="1"/>
</dbReference>
<accession>Q0BUM5</accession>
<protein>
    <recommendedName>
        <fullName evidence="1">Large ribosomal subunit protein bL17</fullName>
    </recommendedName>
    <alternativeName>
        <fullName evidence="2">50S ribosomal protein L17</fullName>
    </alternativeName>
</protein>
<sequence>MRHGIAGRKLGVTSSHRQAMFRNMAVALIKHEQITTTLPKAKELRPVAEKLITLGKRGGLHARRQAYAQLRDEVIVTKLFSAIAERYKARQGGYTRVLKAGVRYGDAASMAVIELVDRDVSAKGQDSGPRPERDETEE</sequence>
<gene>
    <name evidence="1" type="primary">rplQ</name>
    <name type="ordered locus">GbCGDNIH1_0579</name>
</gene>
<evidence type="ECO:0000255" key="1">
    <source>
        <dbReference type="HAMAP-Rule" id="MF_01368"/>
    </source>
</evidence>
<evidence type="ECO:0000305" key="2"/>
<proteinExistence type="inferred from homology"/>
<name>RL17_GRABC</name>
<reference key="1">
    <citation type="journal article" date="2007" name="J. Bacteriol.">
        <title>Genome sequence analysis of the emerging human pathogenic acetic acid bacterium Granulibacter bethesdensis.</title>
        <authorList>
            <person name="Greenberg D.E."/>
            <person name="Porcella S.F."/>
            <person name="Zelazny A.M."/>
            <person name="Virtaneva K."/>
            <person name="Sturdevant D.E."/>
            <person name="Kupko J.J. III"/>
            <person name="Barbian K.D."/>
            <person name="Babar A."/>
            <person name="Dorward D.W."/>
            <person name="Holland S.M."/>
        </authorList>
    </citation>
    <scope>NUCLEOTIDE SEQUENCE [LARGE SCALE GENOMIC DNA]</scope>
    <source>
        <strain>ATCC BAA-1260 / CGDNIH1</strain>
    </source>
</reference>